<comment type="function">
    <text evidence="1">Involved in mitochondrial or peroxisomal functions and amino acid signaling pathways.</text>
</comment>
<comment type="subcellular location">
    <subcellularLocation>
        <location evidence="1">Vacuole membrane</location>
        <topology evidence="1">Peripheral membrane protein</topology>
    </subcellularLocation>
    <subcellularLocation>
        <location evidence="1">Cytoplasmic vesicle membrane</location>
        <topology evidence="1">Peripheral membrane protein</topology>
    </subcellularLocation>
    <text evidence="1">Vesicular and vacuolar.</text>
</comment>
<comment type="domain">
    <text evidence="1">May contain a beta-propeller domain involved in specific binding to phosphatidylinositol 3,5-bisphosphate (PIP2), leading to the association of the protein to the membrane.</text>
</comment>
<comment type="similarity">
    <text evidence="3">Belongs to the WD repeat PROPPIN family.</text>
</comment>
<organism>
    <name type="scientific">Neurospora crassa (strain ATCC 24698 / 74-OR23-1A / CBS 708.71 / DSM 1257 / FGSC 987)</name>
    <dbReference type="NCBI Taxonomy" id="367110"/>
    <lineage>
        <taxon>Eukaryota</taxon>
        <taxon>Fungi</taxon>
        <taxon>Dikarya</taxon>
        <taxon>Ascomycota</taxon>
        <taxon>Pezizomycotina</taxon>
        <taxon>Sordariomycetes</taxon>
        <taxon>Sordariomycetidae</taxon>
        <taxon>Sordariales</taxon>
        <taxon>Sordariaceae</taxon>
        <taxon>Neurospora</taxon>
    </lineage>
</organism>
<feature type="chain" id="PRO_0000051030" description="SVP1-like protein 2">
    <location>
        <begin position="1"/>
        <end position="429"/>
    </location>
</feature>
<feature type="repeat" description="WD 1">
    <location>
        <begin position="10"/>
        <end position="48"/>
    </location>
</feature>
<feature type="repeat" description="WD 2">
    <location>
        <begin position="50"/>
        <end position="96"/>
    </location>
</feature>
<feature type="repeat" description="WD 3">
    <location>
        <begin position="178"/>
        <end position="218"/>
    </location>
</feature>
<feature type="repeat" description="WD 4">
    <location>
        <begin position="223"/>
        <end position="262"/>
    </location>
</feature>
<feature type="region of interest" description="Disordered" evidence="2">
    <location>
        <begin position="262"/>
        <end position="297"/>
    </location>
</feature>
<protein>
    <recommendedName>
        <fullName>SVP1-like protein 2</fullName>
    </recommendedName>
    <alternativeName>
        <fullName>Autophagy-related protein 14</fullName>
    </alternativeName>
</protein>
<sequence length="429" mass="45740">MDTRRILEHPVLAPVLSVTFNHDNSCFAVGLDHGFRIYESGSCVLRTSRDFGAGIGMVQMLGRTNILGLVGGGRQTKLSRNKLVLWDDKSKKQVGVISASSLVRGAKMSSKRIVLVLMDRVQVYQTAKPHPLLSTYETTDNPLGLCCLSSDRIAFPGRAIGHVQLVEVETGNVSIITAHTSALRAMALSQDGELLATASEMGTIIRVYATSNCARLYELRRGIDKAIIFSIGFSPSGKYLACTSDKSTLHVFDVTRPGGTRPITSNGGTAYAAGEPSVTGNNRPSSPYSVASSSGGGGGVMVNSNNGGSDMAADDGQGRWGFLSKLPLMPRIFSDPYSFASAKFEMADEPVSNGSREPLTRDGGLAIIGGPLKGNLGWISETEMVVIGAGRDPKWEKFAIQEGGQQDGYQGGGRRLVRVGWKRYGGETP</sequence>
<gene>
    <name type="primary">apg-14</name>
    <name type="synonym">hsv2</name>
    <name type="ORF">NCU02466</name>
</gene>
<evidence type="ECO:0000250" key="1"/>
<evidence type="ECO:0000256" key="2">
    <source>
        <dbReference type="SAM" id="MobiDB-lite"/>
    </source>
</evidence>
<evidence type="ECO:0000305" key="3"/>
<keyword id="KW-0968">Cytoplasmic vesicle</keyword>
<keyword id="KW-0472">Membrane</keyword>
<keyword id="KW-0653">Protein transport</keyword>
<keyword id="KW-1185">Reference proteome</keyword>
<keyword id="KW-0677">Repeat</keyword>
<keyword id="KW-0813">Transport</keyword>
<keyword id="KW-0926">Vacuole</keyword>
<keyword id="KW-0853">WD repeat</keyword>
<accession>Q7SG97</accession>
<accession>V5IQQ4</accession>
<reference key="1">
    <citation type="journal article" date="2003" name="Nature">
        <title>The genome sequence of the filamentous fungus Neurospora crassa.</title>
        <authorList>
            <person name="Galagan J.E."/>
            <person name="Calvo S.E."/>
            <person name="Borkovich K.A."/>
            <person name="Selker E.U."/>
            <person name="Read N.D."/>
            <person name="Jaffe D.B."/>
            <person name="FitzHugh W."/>
            <person name="Ma L.-J."/>
            <person name="Smirnov S."/>
            <person name="Purcell S."/>
            <person name="Rehman B."/>
            <person name="Elkins T."/>
            <person name="Engels R."/>
            <person name="Wang S."/>
            <person name="Nielsen C.B."/>
            <person name="Butler J."/>
            <person name="Endrizzi M."/>
            <person name="Qui D."/>
            <person name="Ianakiev P."/>
            <person name="Bell-Pedersen D."/>
            <person name="Nelson M.A."/>
            <person name="Werner-Washburne M."/>
            <person name="Selitrennikoff C.P."/>
            <person name="Kinsey J.A."/>
            <person name="Braun E.L."/>
            <person name="Zelter A."/>
            <person name="Schulte U."/>
            <person name="Kothe G.O."/>
            <person name="Jedd G."/>
            <person name="Mewes H.-W."/>
            <person name="Staben C."/>
            <person name="Marcotte E."/>
            <person name="Greenberg D."/>
            <person name="Roy A."/>
            <person name="Foley K."/>
            <person name="Naylor J."/>
            <person name="Stange-Thomann N."/>
            <person name="Barrett R."/>
            <person name="Gnerre S."/>
            <person name="Kamal M."/>
            <person name="Kamvysselis M."/>
            <person name="Mauceli E.W."/>
            <person name="Bielke C."/>
            <person name="Rudd S."/>
            <person name="Frishman D."/>
            <person name="Krystofova S."/>
            <person name="Rasmussen C."/>
            <person name="Metzenberg R.L."/>
            <person name="Perkins D.D."/>
            <person name="Kroken S."/>
            <person name="Cogoni C."/>
            <person name="Macino G."/>
            <person name="Catcheside D.E.A."/>
            <person name="Li W."/>
            <person name="Pratt R.J."/>
            <person name="Osmani S.A."/>
            <person name="DeSouza C.P.C."/>
            <person name="Glass N.L."/>
            <person name="Orbach M.J."/>
            <person name="Berglund J.A."/>
            <person name="Voelker R."/>
            <person name="Yarden O."/>
            <person name="Plamann M."/>
            <person name="Seiler S."/>
            <person name="Dunlap J.C."/>
            <person name="Radford A."/>
            <person name="Aramayo R."/>
            <person name="Natvig D.O."/>
            <person name="Alex L.A."/>
            <person name="Mannhaupt G."/>
            <person name="Ebbole D.J."/>
            <person name="Freitag M."/>
            <person name="Paulsen I."/>
            <person name="Sachs M.S."/>
            <person name="Lander E.S."/>
            <person name="Nusbaum C."/>
            <person name="Birren B.W."/>
        </authorList>
    </citation>
    <scope>NUCLEOTIDE SEQUENCE [LARGE SCALE GENOMIC DNA]</scope>
    <source>
        <strain>ATCC 24698 / 74-OR23-1A / CBS 708.71 / DSM 1257 / FGSC 987</strain>
    </source>
</reference>
<name>HSV2_NEUCR</name>
<dbReference type="EMBL" id="CM002236">
    <property type="protein sequence ID" value="ESA43889.1"/>
    <property type="molecule type" value="Genomic_DNA"/>
</dbReference>
<dbReference type="RefSeq" id="XP_011392953.1">
    <property type="nucleotide sequence ID" value="XM_011394651.1"/>
</dbReference>
<dbReference type="SMR" id="Q7SG97"/>
<dbReference type="FunCoup" id="Q7SG97">
    <property type="interactions" value="371"/>
</dbReference>
<dbReference type="STRING" id="367110.Q7SG97"/>
<dbReference type="PaxDb" id="5141-EFNCRP00000001933"/>
<dbReference type="EnsemblFungi" id="ESA43889">
    <property type="protein sequence ID" value="ESA43889"/>
    <property type="gene ID" value="NCU02466"/>
</dbReference>
<dbReference type="GeneID" id="3881242"/>
<dbReference type="KEGG" id="ncr:NCU02466"/>
<dbReference type="VEuPathDB" id="FungiDB:NCU02466"/>
<dbReference type="HOGENOM" id="CLU_025895_0_0_1"/>
<dbReference type="InParanoid" id="Q7SG97"/>
<dbReference type="OrthoDB" id="1667587at2759"/>
<dbReference type="Proteomes" id="UP000001805">
    <property type="component" value="Chromosome 1, Linkage Group I"/>
</dbReference>
<dbReference type="GO" id="GO:0030659">
    <property type="term" value="C:cytoplasmic vesicle membrane"/>
    <property type="evidence" value="ECO:0007669"/>
    <property type="project" value="UniProtKB-SubCell"/>
</dbReference>
<dbReference type="GO" id="GO:0005829">
    <property type="term" value="C:cytosol"/>
    <property type="evidence" value="ECO:0000318"/>
    <property type="project" value="GO_Central"/>
</dbReference>
<dbReference type="GO" id="GO:0034045">
    <property type="term" value="C:phagophore assembly site membrane"/>
    <property type="evidence" value="ECO:0000318"/>
    <property type="project" value="GO_Central"/>
</dbReference>
<dbReference type="GO" id="GO:0005774">
    <property type="term" value="C:vacuolar membrane"/>
    <property type="evidence" value="ECO:0007669"/>
    <property type="project" value="UniProtKB-SubCell"/>
</dbReference>
<dbReference type="GO" id="GO:0080025">
    <property type="term" value="F:phosphatidylinositol-3,5-bisphosphate binding"/>
    <property type="evidence" value="ECO:0000318"/>
    <property type="project" value="GO_Central"/>
</dbReference>
<dbReference type="GO" id="GO:0032266">
    <property type="term" value="F:phosphatidylinositol-3-phosphate binding"/>
    <property type="evidence" value="ECO:0000318"/>
    <property type="project" value="GO_Central"/>
</dbReference>
<dbReference type="GO" id="GO:0030674">
    <property type="term" value="F:protein-macromolecule adaptor activity"/>
    <property type="evidence" value="ECO:0000318"/>
    <property type="project" value="GO_Central"/>
</dbReference>
<dbReference type="GO" id="GO:0000422">
    <property type="term" value="P:autophagy of mitochondrion"/>
    <property type="evidence" value="ECO:0000318"/>
    <property type="project" value="GO_Central"/>
</dbReference>
<dbReference type="GO" id="GO:0061723">
    <property type="term" value="P:glycophagy"/>
    <property type="evidence" value="ECO:0000318"/>
    <property type="project" value="GO_Central"/>
</dbReference>
<dbReference type="GO" id="GO:0044804">
    <property type="term" value="P:nucleophagy"/>
    <property type="evidence" value="ECO:0000318"/>
    <property type="project" value="GO_Central"/>
</dbReference>
<dbReference type="GO" id="GO:0000425">
    <property type="term" value="P:pexophagy"/>
    <property type="evidence" value="ECO:0000318"/>
    <property type="project" value="GO_Central"/>
</dbReference>
<dbReference type="GO" id="GO:0034497">
    <property type="term" value="P:protein localization to phagophore assembly site"/>
    <property type="evidence" value="ECO:0000318"/>
    <property type="project" value="GO_Central"/>
</dbReference>
<dbReference type="GO" id="GO:0015031">
    <property type="term" value="P:protein transport"/>
    <property type="evidence" value="ECO:0007669"/>
    <property type="project" value="UniProtKB-KW"/>
</dbReference>
<dbReference type="FunFam" id="2.130.10.10:FF:001432">
    <property type="entry name" value="SVP1-like protein 2, variant"/>
    <property type="match status" value="1"/>
</dbReference>
<dbReference type="Gene3D" id="2.130.10.10">
    <property type="entry name" value="YVTN repeat-like/Quinoprotein amine dehydrogenase"/>
    <property type="match status" value="1"/>
</dbReference>
<dbReference type="InterPro" id="IPR048720">
    <property type="entry name" value="PROPPIN"/>
</dbReference>
<dbReference type="InterPro" id="IPR015943">
    <property type="entry name" value="WD40/YVTN_repeat-like_dom_sf"/>
</dbReference>
<dbReference type="InterPro" id="IPR036322">
    <property type="entry name" value="WD40_repeat_dom_sf"/>
</dbReference>
<dbReference type="InterPro" id="IPR001680">
    <property type="entry name" value="WD40_rpt"/>
</dbReference>
<dbReference type="PANTHER" id="PTHR11227">
    <property type="entry name" value="WD-REPEAT PROTEIN INTERACTING WITH PHOSPHOINOSIDES WIPI -RELATED"/>
    <property type="match status" value="1"/>
</dbReference>
<dbReference type="Pfam" id="PF21032">
    <property type="entry name" value="PROPPIN"/>
    <property type="match status" value="1"/>
</dbReference>
<dbReference type="SMART" id="SM00320">
    <property type="entry name" value="WD40"/>
    <property type="match status" value="3"/>
</dbReference>
<dbReference type="SUPFAM" id="SSF50978">
    <property type="entry name" value="WD40 repeat-like"/>
    <property type="match status" value="1"/>
</dbReference>
<proteinExistence type="inferred from homology"/>